<gene>
    <name type="primary">Cyp2a12</name>
</gene>
<keyword id="KW-0256">Endoplasmic reticulum</keyword>
<keyword id="KW-0349">Heme</keyword>
<keyword id="KW-0408">Iron</keyword>
<keyword id="KW-0472">Membrane</keyword>
<keyword id="KW-0479">Metal-binding</keyword>
<keyword id="KW-0492">Microsome</keyword>
<keyword id="KW-0503">Monooxygenase</keyword>
<keyword id="KW-0560">Oxidoreductase</keyword>
<keyword id="KW-1185">Reference proteome</keyword>
<dbReference type="EC" id="1.14.14.1"/>
<dbReference type="EMBL" id="L06463">
    <property type="status" value="NOT_ANNOTATED_CDS"/>
    <property type="molecule type" value="mRNA"/>
</dbReference>
<dbReference type="EMBL" id="CH466593">
    <property type="protein sequence ID" value="EDL24208.1"/>
    <property type="molecule type" value="Genomic_DNA"/>
</dbReference>
<dbReference type="EMBL" id="BC018356">
    <property type="protein sequence ID" value="AAH18356.1"/>
    <property type="molecule type" value="mRNA"/>
</dbReference>
<dbReference type="EMBL" id="BC094017">
    <property type="protein sequence ID" value="AAH94017.1"/>
    <property type="molecule type" value="mRNA"/>
</dbReference>
<dbReference type="CCDS" id="CCDS21009.1"/>
<dbReference type="PIR" id="S32491">
    <property type="entry name" value="S32491"/>
</dbReference>
<dbReference type="RefSeq" id="NP_598418.1">
    <property type="nucleotide sequence ID" value="NM_133657.1"/>
</dbReference>
<dbReference type="SMR" id="P56593"/>
<dbReference type="BioGRID" id="199008">
    <property type="interactions" value="26"/>
</dbReference>
<dbReference type="FunCoup" id="P56593">
    <property type="interactions" value="843"/>
</dbReference>
<dbReference type="STRING" id="10090.ENSMUSP00000074990"/>
<dbReference type="GlyGen" id="P56593">
    <property type="glycosylation" value="2 sites, 1 O-linked glycan (1 site)"/>
</dbReference>
<dbReference type="iPTMnet" id="P56593"/>
<dbReference type="PhosphoSitePlus" id="P56593"/>
<dbReference type="SwissPalm" id="P56593"/>
<dbReference type="jPOST" id="P56593"/>
<dbReference type="PaxDb" id="10090-ENSMUSP00000074990"/>
<dbReference type="PeptideAtlas" id="P56593"/>
<dbReference type="ProteomicsDB" id="278004"/>
<dbReference type="DNASU" id="13085"/>
<dbReference type="Ensembl" id="ENSMUST00000075552.7">
    <property type="protein sequence ID" value="ENSMUSP00000074990.6"/>
    <property type="gene ID" value="ENSMUSG00000060407.7"/>
</dbReference>
<dbReference type="GeneID" id="13085"/>
<dbReference type="KEGG" id="mmu:13085"/>
<dbReference type="UCSC" id="uc009fux.1">
    <property type="organism name" value="mouse"/>
</dbReference>
<dbReference type="AGR" id="MGI:105055"/>
<dbReference type="CTD" id="13085"/>
<dbReference type="MGI" id="MGI:105055">
    <property type="gene designation" value="Cyp2a12"/>
</dbReference>
<dbReference type="VEuPathDB" id="HostDB:ENSMUSG00000060407"/>
<dbReference type="eggNOG" id="KOG0156">
    <property type="taxonomic scope" value="Eukaryota"/>
</dbReference>
<dbReference type="GeneTree" id="ENSGT00940000154117"/>
<dbReference type="HOGENOM" id="CLU_001570_22_3_1"/>
<dbReference type="InParanoid" id="P56593"/>
<dbReference type="OMA" id="QLYEIFY"/>
<dbReference type="OrthoDB" id="2789670at2759"/>
<dbReference type="PhylomeDB" id="P56593"/>
<dbReference type="TreeFam" id="TF352043"/>
<dbReference type="Reactome" id="R-MMU-211935">
    <property type="pathway name" value="Fatty acids"/>
</dbReference>
<dbReference type="Reactome" id="R-MMU-211981">
    <property type="pathway name" value="Xenobiotics"/>
</dbReference>
<dbReference type="Reactome" id="R-MMU-211999">
    <property type="pathway name" value="CYP2E1 reactions"/>
</dbReference>
<dbReference type="BioGRID-ORCS" id="13085">
    <property type="hits" value="1 hit in 77 CRISPR screens"/>
</dbReference>
<dbReference type="PRO" id="PR:P56593"/>
<dbReference type="Proteomes" id="UP000000589">
    <property type="component" value="Chromosome 7"/>
</dbReference>
<dbReference type="RNAct" id="P56593">
    <property type="molecule type" value="protein"/>
</dbReference>
<dbReference type="Bgee" id="ENSMUSG00000060407">
    <property type="expression patterns" value="Expressed in liver and 22 other cell types or tissues"/>
</dbReference>
<dbReference type="GO" id="GO:0005789">
    <property type="term" value="C:endoplasmic reticulum membrane"/>
    <property type="evidence" value="ECO:0007669"/>
    <property type="project" value="UniProtKB-SubCell"/>
</dbReference>
<dbReference type="GO" id="GO:0020037">
    <property type="term" value="F:heme binding"/>
    <property type="evidence" value="ECO:0007669"/>
    <property type="project" value="InterPro"/>
</dbReference>
<dbReference type="GO" id="GO:0005506">
    <property type="term" value="F:iron ion binding"/>
    <property type="evidence" value="ECO:0007669"/>
    <property type="project" value="InterPro"/>
</dbReference>
<dbReference type="GO" id="GO:0016712">
    <property type="term" value="F:oxidoreductase activity, acting on paired donors, with incorporation or reduction of molecular oxygen, reduced flavin or flavoprotein as one donor, and incorporation of one atom of oxygen"/>
    <property type="evidence" value="ECO:0007669"/>
    <property type="project" value="UniProtKB-EC"/>
</dbReference>
<dbReference type="CDD" id="cd20668">
    <property type="entry name" value="CYP2A"/>
    <property type="match status" value="1"/>
</dbReference>
<dbReference type="FunFam" id="1.10.630.10:FF:000238">
    <property type="entry name" value="Cytochrome P450 2A6"/>
    <property type="match status" value="1"/>
</dbReference>
<dbReference type="Gene3D" id="1.10.630.10">
    <property type="entry name" value="Cytochrome P450"/>
    <property type="match status" value="1"/>
</dbReference>
<dbReference type="InterPro" id="IPR001128">
    <property type="entry name" value="Cyt_P450"/>
</dbReference>
<dbReference type="InterPro" id="IPR017972">
    <property type="entry name" value="Cyt_P450_CS"/>
</dbReference>
<dbReference type="InterPro" id="IPR002401">
    <property type="entry name" value="Cyt_P450_E_grp-I"/>
</dbReference>
<dbReference type="InterPro" id="IPR008067">
    <property type="entry name" value="Cyt_P450_E_grp-I_CYP2A-like"/>
</dbReference>
<dbReference type="InterPro" id="IPR036396">
    <property type="entry name" value="Cyt_P450_sf"/>
</dbReference>
<dbReference type="InterPro" id="IPR050182">
    <property type="entry name" value="Cytochrome_P450_fam2"/>
</dbReference>
<dbReference type="PANTHER" id="PTHR24300">
    <property type="entry name" value="CYTOCHROME P450 508A4-RELATED"/>
    <property type="match status" value="1"/>
</dbReference>
<dbReference type="PANTHER" id="PTHR24300:SF103">
    <property type="entry name" value="CYTOCHROME P450-RELATED"/>
    <property type="match status" value="1"/>
</dbReference>
<dbReference type="Pfam" id="PF00067">
    <property type="entry name" value="p450"/>
    <property type="match status" value="1"/>
</dbReference>
<dbReference type="PRINTS" id="PR00463">
    <property type="entry name" value="EP450I"/>
</dbReference>
<dbReference type="PRINTS" id="PR01684">
    <property type="entry name" value="EP450ICYP2A"/>
</dbReference>
<dbReference type="PRINTS" id="PR00385">
    <property type="entry name" value="P450"/>
</dbReference>
<dbReference type="SUPFAM" id="SSF48264">
    <property type="entry name" value="Cytochrome P450"/>
    <property type="match status" value="1"/>
</dbReference>
<dbReference type="PROSITE" id="PS00086">
    <property type="entry name" value="CYTOCHROME_P450"/>
    <property type="match status" value="1"/>
</dbReference>
<organism>
    <name type="scientific">Mus musculus</name>
    <name type="common">Mouse</name>
    <dbReference type="NCBI Taxonomy" id="10090"/>
    <lineage>
        <taxon>Eukaryota</taxon>
        <taxon>Metazoa</taxon>
        <taxon>Chordata</taxon>
        <taxon>Craniata</taxon>
        <taxon>Vertebrata</taxon>
        <taxon>Euteleostomi</taxon>
        <taxon>Mammalia</taxon>
        <taxon>Eutheria</taxon>
        <taxon>Euarchontoglires</taxon>
        <taxon>Glires</taxon>
        <taxon>Rodentia</taxon>
        <taxon>Myomorpha</taxon>
        <taxon>Muroidea</taxon>
        <taxon>Muridae</taxon>
        <taxon>Murinae</taxon>
        <taxon>Mus</taxon>
        <taxon>Mus</taxon>
    </lineage>
</organism>
<accession>P56593</accession>
<accession>Q8VCW9</accession>
<feature type="chain" id="PRO_0000051675" description="Cytochrome P450 2A12">
    <location>
        <begin position="1"/>
        <end position="492"/>
    </location>
</feature>
<feature type="binding site" description="axial binding residue" evidence="1">
    <location>
        <position position="437"/>
    </location>
    <ligand>
        <name>heme</name>
        <dbReference type="ChEBI" id="CHEBI:30413"/>
    </ligand>
    <ligandPart>
        <name>Fe</name>
        <dbReference type="ChEBI" id="CHEBI:18248"/>
    </ligandPart>
</feature>
<feature type="mutagenesis site" description="Same as wild-type." evidence="2">
    <original>Q</original>
    <variation>G</variation>
    <location>
        <position position="206"/>
    </location>
</feature>
<feature type="mutagenesis site" description="Stabilizes the protein, 17-fold lower Vmax." evidence="2">
    <original>N</original>
    <variation>L</variation>
    <location>
        <position position="208"/>
    </location>
</feature>
<feature type="mutagenesis site" description="Same as wild-type." evidence="2">
    <original>K</original>
    <variation>Q</variation>
    <location>
        <position position="209"/>
    </location>
</feature>
<feature type="sequence conflict" description="In Ref. 1; L06463." evidence="3" ref="1">
    <original>R</original>
    <variation>H</variation>
    <location>
        <position position="147"/>
    </location>
</feature>
<feature type="sequence conflict" description="In Ref. 1; L06463." evidence="3" ref="1">
    <original>D</original>
    <variation>N</variation>
    <location>
        <position position="375"/>
    </location>
</feature>
<feature type="sequence conflict" description="In Ref. 1; L06463." evidence="3" ref="1">
    <original>G</original>
    <variation>A</variation>
    <location>
        <position position="386"/>
    </location>
</feature>
<feature type="sequence conflict" description="In Ref. 1; L06463." evidence="3" ref="1">
    <original>LF</original>
    <variation>FL</variation>
    <location>
        <begin position="449"/>
        <end position="450"/>
    </location>
</feature>
<sequence length="492" mass="56179">MLGSGLLLLAILAFLSVMVLVSVWQQKIRGKLPPGPIPLPFIGNYLQLNRKDVYSSITQLQEHYGPVFTIHLGPRRVVVLYGYDAVKEALVDHAEEFSGRGEQATFNTLFKGYGVAFSNGERAKQLRRFSIATLRDFGMGKRGVEERIQEEAGCLIKMLQGTCGAPIDPTIYLSKTASNVISSIVFGDRFNYEDKEFLSLLQMMGQVNKFAASPTGQLYDMFHSVMKYLPGPQQQIIKDSHKLEDFMIQKVKQNQSTLDPNSPRDFIDSFLIHMQKEKYVNSEFHMKNLVMTSLNLFFAGSETVSSTLRYGFLLLMKHPDVEAKVHEEIDRVIGRNRQPQYEDHMKMPYTQAVINEIQRFSNFAPLGIPRRITKDTSFRGFFLPKGTEVFPILGSLMTDPKFFSSPKDFNPQHFLDDKGQLKKIPAFLPFSTGKRFCLGDSLAKMELFLFFTTILQNFRFKFPRKLEDINESPTPEGFTRIIPKYTMSFVPI</sequence>
<reference key="1">
    <citation type="journal article" date="1993" name="Biochem. J.">
        <title>Site-directed mutagenesis of mouse steroid 7 alpha-hydroxylase (cytochrome P-450(7) alpha): role of residue-209 in determining steroid-cytochrome P-450 interaction.</title>
        <authorList>
            <person name="Iwasaki M."/>
            <person name="Lindberg R.L.P."/>
            <person name="Juvonen R.O."/>
            <person name="Negishi M."/>
        </authorList>
    </citation>
    <scope>NUCLEOTIDE SEQUENCE [MRNA]</scope>
    <scope>MUTAGENESIS</scope>
    <source>
        <strain>AKR/J</strain>
        <tissue>Liver</tissue>
    </source>
</reference>
<reference key="2">
    <citation type="submission" date="2005-09" db="EMBL/GenBank/DDBJ databases">
        <authorList>
            <person name="Mural R.J."/>
            <person name="Adams M.D."/>
            <person name="Myers E.W."/>
            <person name="Smith H.O."/>
            <person name="Venter J.C."/>
        </authorList>
    </citation>
    <scope>NUCLEOTIDE SEQUENCE [LARGE SCALE GENOMIC DNA]</scope>
</reference>
<reference key="3">
    <citation type="journal article" date="2004" name="Genome Res.">
        <title>The status, quality, and expansion of the NIH full-length cDNA project: the Mammalian Gene Collection (MGC).</title>
        <authorList>
            <consortium name="The MGC Project Team"/>
        </authorList>
    </citation>
    <scope>NUCLEOTIDE SEQUENCE [LARGE SCALE MRNA]</scope>
    <source>
        <strain>FVB/N</strain>
        <tissue>Liver</tissue>
    </source>
</reference>
<reference key="4">
    <citation type="journal article" date="2010" name="Cell">
        <title>A tissue-specific atlas of mouse protein phosphorylation and expression.</title>
        <authorList>
            <person name="Huttlin E.L."/>
            <person name="Jedrychowski M.P."/>
            <person name="Elias J.E."/>
            <person name="Goswami T."/>
            <person name="Rad R."/>
            <person name="Beausoleil S.A."/>
            <person name="Villen J."/>
            <person name="Haas W."/>
            <person name="Sowa M.E."/>
            <person name="Gygi S.P."/>
        </authorList>
    </citation>
    <scope>IDENTIFICATION BY MASS SPECTROMETRY [LARGE SCALE ANALYSIS]</scope>
    <source>
        <tissue>Liver</tissue>
    </source>
</reference>
<protein>
    <recommendedName>
        <fullName>Cytochrome P450 2A12</fullName>
        <ecNumber>1.14.14.1</ecNumber>
    </recommendedName>
    <alternativeName>
        <fullName>CYPIIA12</fullName>
    </alternativeName>
    <alternativeName>
        <fullName>Steroid hormones 7-alpha-hydroxylase</fullName>
    </alternativeName>
    <alternativeName>
        <fullName>Testosterone 7-alpha-hydroxylase</fullName>
    </alternativeName>
</protein>
<comment type="function">
    <text>Highly active in the 7-alpha-hydroxylation of testosterone.</text>
</comment>
<comment type="catalytic activity">
    <reaction>
        <text>an organic molecule + reduced [NADPH--hemoprotein reductase] + O2 = an alcohol + oxidized [NADPH--hemoprotein reductase] + H2O + H(+)</text>
        <dbReference type="Rhea" id="RHEA:17149"/>
        <dbReference type="Rhea" id="RHEA-COMP:11964"/>
        <dbReference type="Rhea" id="RHEA-COMP:11965"/>
        <dbReference type="ChEBI" id="CHEBI:15377"/>
        <dbReference type="ChEBI" id="CHEBI:15378"/>
        <dbReference type="ChEBI" id="CHEBI:15379"/>
        <dbReference type="ChEBI" id="CHEBI:30879"/>
        <dbReference type="ChEBI" id="CHEBI:57618"/>
        <dbReference type="ChEBI" id="CHEBI:58210"/>
        <dbReference type="ChEBI" id="CHEBI:142491"/>
        <dbReference type="EC" id="1.14.14.1"/>
    </reaction>
</comment>
<comment type="cofactor">
    <cofactor evidence="1">
        <name>heme</name>
        <dbReference type="ChEBI" id="CHEBI:30413"/>
    </cofactor>
</comment>
<comment type="subcellular location">
    <subcellularLocation>
        <location>Endoplasmic reticulum membrane</location>
        <topology>Peripheral membrane protein</topology>
    </subcellularLocation>
    <subcellularLocation>
        <location>Microsome membrane</location>
        <topology>Peripheral membrane protein</topology>
    </subcellularLocation>
</comment>
<comment type="tissue specificity">
    <text>Liver.</text>
</comment>
<comment type="similarity">
    <text evidence="3">Belongs to the cytochrome P450 family.</text>
</comment>
<name>CP2AC_MOUSE</name>
<proteinExistence type="evidence at protein level"/>
<evidence type="ECO:0000250" key="1"/>
<evidence type="ECO:0000269" key="2">
    <source>
    </source>
</evidence>
<evidence type="ECO:0000305" key="3"/>